<comment type="function">
    <text evidence="1">Involved in the oxidation of myo-inositol (MI) to 2-keto-myo-inositol (2KMI or 2-inosose).</text>
</comment>
<comment type="catalytic activity">
    <reaction evidence="1">
        <text>myo-inositol + NAD(+) = scyllo-inosose + NADH + H(+)</text>
        <dbReference type="Rhea" id="RHEA:16949"/>
        <dbReference type="ChEBI" id="CHEBI:15378"/>
        <dbReference type="ChEBI" id="CHEBI:17268"/>
        <dbReference type="ChEBI" id="CHEBI:17811"/>
        <dbReference type="ChEBI" id="CHEBI:57540"/>
        <dbReference type="ChEBI" id="CHEBI:57945"/>
        <dbReference type="EC" id="1.1.1.18"/>
    </reaction>
</comment>
<comment type="subunit">
    <text evidence="1">Homotetramer.</text>
</comment>
<comment type="similarity">
    <text evidence="1">Belongs to the Gfo/Idh/MocA family.</text>
</comment>
<reference key="1">
    <citation type="submission" date="2006-10" db="EMBL/GenBank/DDBJ databases">
        <authorList>
            <person name="Fleischmann R.D."/>
            <person name="Dodson R.J."/>
            <person name="Haft D.H."/>
            <person name="Merkel J.S."/>
            <person name="Nelson W.C."/>
            <person name="Fraser C.M."/>
        </authorList>
    </citation>
    <scope>NUCLEOTIDE SEQUENCE [LARGE SCALE GENOMIC DNA]</scope>
    <source>
        <strain>ATCC 700084 / mc(2)155</strain>
    </source>
</reference>
<reference key="2">
    <citation type="journal article" date="2007" name="Genome Biol.">
        <title>Interrupted coding sequences in Mycobacterium smegmatis: authentic mutations or sequencing errors?</title>
        <authorList>
            <person name="Deshayes C."/>
            <person name="Perrodou E."/>
            <person name="Gallien S."/>
            <person name="Euphrasie D."/>
            <person name="Schaeffer C."/>
            <person name="Van-Dorsselaer A."/>
            <person name="Poch O."/>
            <person name="Lecompte O."/>
            <person name="Reyrat J.-M."/>
        </authorList>
    </citation>
    <scope>NUCLEOTIDE SEQUENCE [LARGE SCALE GENOMIC DNA]</scope>
    <source>
        <strain>ATCC 700084 / mc(2)155</strain>
    </source>
</reference>
<reference key="3">
    <citation type="journal article" date="2009" name="Genome Res.">
        <title>Ortho-proteogenomics: multiple proteomes investigation through orthology and a new MS-based protocol.</title>
        <authorList>
            <person name="Gallien S."/>
            <person name="Perrodou E."/>
            <person name="Carapito C."/>
            <person name="Deshayes C."/>
            <person name="Reyrat J.-M."/>
            <person name="Van Dorsselaer A."/>
            <person name="Poch O."/>
            <person name="Schaeffer C."/>
            <person name="Lecompte O."/>
        </authorList>
    </citation>
    <scope>NUCLEOTIDE SEQUENCE [LARGE SCALE GENOMIC DNA]</scope>
    <source>
        <strain>ATCC 700084 / mc(2)155</strain>
    </source>
</reference>
<accession>A0R191</accession>
<accession>I7GCN3</accession>
<proteinExistence type="inferred from homology"/>
<name>IOLG_MYCS2</name>
<protein>
    <recommendedName>
        <fullName evidence="1">Inositol 2-dehydrogenase</fullName>
        <ecNumber evidence="1">1.1.1.18</ecNumber>
    </recommendedName>
    <alternativeName>
        <fullName evidence="1">Myo-inositol 2-dehydrogenase</fullName>
        <shortName evidence="1">MI 2-dehydrogenase</shortName>
    </alternativeName>
</protein>
<dbReference type="EC" id="1.1.1.18" evidence="1"/>
<dbReference type="EMBL" id="CP000480">
    <property type="protein sequence ID" value="ABK74556.1"/>
    <property type="molecule type" value="Genomic_DNA"/>
</dbReference>
<dbReference type="EMBL" id="CP001663">
    <property type="protein sequence ID" value="AFP41001.1"/>
    <property type="molecule type" value="Genomic_DNA"/>
</dbReference>
<dbReference type="RefSeq" id="WP_011729996.1">
    <property type="nucleotide sequence ID" value="NZ_SIJM01000004.1"/>
</dbReference>
<dbReference type="RefSeq" id="YP_888929.1">
    <property type="nucleotide sequence ID" value="NC_008596.1"/>
</dbReference>
<dbReference type="SMR" id="A0R191"/>
<dbReference type="STRING" id="246196.MSMEG_4666"/>
<dbReference type="PaxDb" id="246196-MSMEI_4547"/>
<dbReference type="KEGG" id="msb:LJ00_23075"/>
<dbReference type="KEGG" id="msg:MSMEI_4547"/>
<dbReference type="KEGG" id="msm:MSMEG_4666"/>
<dbReference type="PATRIC" id="fig|246196.19.peg.4559"/>
<dbReference type="eggNOG" id="COG0673">
    <property type="taxonomic scope" value="Bacteria"/>
</dbReference>
<dbReference type="OrthoDB" id="256869at2"/>
<dbReference type="Proteomes" id="UP000000757">
    <property type="component" value="Chromosome"/>
</dbReference>
<dbReference type="Proteomes" id="UP000006158">
    <property type="component" value="Chromosome"/>
</dbReference>
<dbReference type="GO" id="GO:0050112">
    <property type="term" value="F:inositol 2-dehydrogenase (NAD+) activity"/>
    <property type="evidence" value="ECO:0007669"/>
    <property type="project" value="UniProtKB-UniRule"/>
</dbReference>
<dbReference type="GO" id="GO:0000166">
    <property type="term" value="F:nucleotide binding"/>
    <property type="evidence" value="ECO:0007669"/>
    <property type="project" value="InterPro"/>
</dbReference>
<dbReference type="GO" id="GO:0019310">
    <property type="term" value="P:inositol catabolic process"/>
    <property type="evidence" value="ECO:0007669"/>
    <property type="project" value="UniProtKB-UniRule"/>
</dbReference>
<dbReference type="Gene3D" id="3.30.360.10">
    <property type="entry name" value="Dihydrodipicolinate Reductase, domain 2"/>
    <property type="match status" value="1"/>
</dbReference>
<dbReference type="Gene3D" id="3.40.50.720">
    <property type="entry name" value="NAD(P)-binding Rossmann-like Domain"/>
    <property type="match status" value="1"/>
</dbReference>
<dbReference type="HAMAP" id="MF_01671">
    <property type="entry name" value="IolG"/>
    <property type="match status" value="1"/>
</dbReference>
<dbReference type="InterPro" id="IPR050424">
    <property type="entry name" value="Gfo-Idh-MocA_inositol_DH"/>
</dbReference>
<dbReference type="InterPro" id="IPR000683">
    <property type="entry name" value="Gfo/Idh/MocA-like_OxRdtase_N"/>
</dbReference>
<dbReference type="InterPro" id="IPR055170">
    <property type="entry name" value="GFO_IDH_MocA-like_dom"/>
</dbReference>
<dbReference type="InterPro" id="IPR023794">
    <property type="entry name" value="MI/DCI_dehydrogenase"/>
</dbReference>
<dbReference type="InterPro" id="IPR036291">
    <property type="entry name" value="NAD(P)-bd_dom_sf"/>
</dbReference>
<dbReference type="PANTHER" id="PTHR43593">
    <property type="match status" value="1"/>
</dbReference>
<dbReference type="PANTHER" id="PTHR43593:SF1">
    <property type="entry name" value="INOSITOL 2-DEHYDROGENASE"/>
    <property type="match status" value="1"/>
</dbReference>
<dbReference type="Pfam" id="PF01408">
    <property type="entry name" value="GFO_IDH_MocA"/>
    <property type="match status" value="1"/>
</dbReference>
<dbReference type="Pfam" id="PF22725">
    <property type="entry name" value="GFO_IDH_MocA_C3"/>
    <property type="match status" value="1"/>
</dbReference>
<dbReference type="SUPFAM" id="SSF55347">
    <property type="entry name" value="Glyceraldehyde-3-phosphate dehydrogenase-like, C-terminal domain"/>
    <property type="match status" value="1"/>
</dbReference>
<dbReference type="SUPFAM" id="SSF51735">
    <property type="entry name" value="NAD(P)-binding Rossmann-fold domains"/>
    <property type="match status" value="1"/>
</dbReference>
<evidence type="ECO:0000255" key="1">
    <source>
        <dbReference type="HAMAP-Rule" id="MF_01671"/>
    </source>
</evidence>
<organism>
    <name type="scientific">Mycolicibacterium smegmatis (strain ATCC 700084 / mc(2)155)</name>
    <name type="common">Mycobacterium smegmatis</name>
    <dbReference type="NCBI Taxonomy" id="246196"/>
    <lineage>
        <taxon>Bacteria</taxon>
        <taxon>Bacillati</taxon>
        <taxon>Actinomycetota</taxon>
        <taxon>Actinomycetes</taxon>
        <taxon>Mycobacteriales</taxon>
        <taxon>Mycobacteriaceae</taxon>
        <taxon>Mycolicibacterium</taxon>
    </lineage>
</organism>
<feature type="chain" id="PRO_0000352576" description="Inositol 2-dehydrogenase">
    <location>
        <begin position="1"/>
        <end position="345"/>
    </location>
</feature>
<gene>
    <name evidence="1" type="primary">iolG</name>
    <name type="ordered locus">MSMEG_4666</name>
    <name type="ordered locus">MSMEI_4547</name>
</gene>
<sequence>MSDLRVAVLGVGVMGADHVERLSTRIAGVKVAVVNDFIETRAEEIAAGVPGCRVVSDPLEAIADPDVDAVVLATPGPTHDKQLLACLEQRKPVLCEKPLTTDVDSALDVVRREAELGVRLIQVGFMRRFDPEYAELKTLIDAGEFGQPLVLHCVHRNAAVPPSFDSTMIVKDSLVHEVDVTRFLFDEEIASVHILRPTPNPGAPEGIQDPQIAIMKTPSGKHVDVELFVTTGVGYEVRTELVAEKGTAMIGLDVGLIRKGVPGTWGGAIAPDFRVRFGTAYDIEFQRWVAAVRHGIATGSDDYTDGPTAWDGYAAAAVCAAGVESLAGGQPVEVKMVERASINGA</sequence>
<keyword id="KW-0520">NAD</keyword>
<keyword id="KW-0560">Oxidoreductase</keyword>
<keyword id="KW-1185">Reference proteome</keyword>